<organism>
    <name type="scientific">Methanosphaerula palustris (strain ATCC BAA-1556 / DSM 19958 / E1-9c)</name>
    <dbReference type="NCBI Taxonomy" id="521011"/>
    <lineage>
        <taxon>Archaea</taxon>
        <taxon>Methanobacteriati</taxon>
        <taxon>Methanobacteriota</taxon>
        <taxon>Stenosarchaea group</taxon>
        <taxon>Methanomicrobia</taxon>
        <taxon>Methanomicrobiales</taxon>
        <taxon>Methanoregulaceae</taxon>
        <taxon>Methanosphaerula</taxon>
    </lineage>
</organism>
<keyword id="KW-1003">Cell membrane</keyword>
<keyword id="KW-0169">Cobalamin biosynthesis</keyword>
<keyword id="KW-0170">Cobalt</keyword>
<keyword id="KW-0171">Cobalt transport</keyword>
<keyword id="KW-0406">Ion transport</keyword>
<keyword id="KW-0472">Membrane</keyword>
<keyword id="KW-1185">Reference proteome</keyword>
<keyword id="KW-0812">Transmembrane</keyword>
<keyword id="KW-1133">Transmembrane helix</keyword>
<keyword id="KW-0813">Transport</keyword>
<reference key="1">
    <citation type="journal article" date="2015" name="Genome Announc.">
        <title>Complete Genome Sequence of Methanosphaerula palustris E1-9CT, a Hydrogenotrophic Methanogen Isolated from a Minerotrophic Fen Peatland.</title>
        <authorList>
            <person name="Cadillo-Quiroz H."/>
            <person name="Browne P."/>
            <person name="Kyrpides N."/>
            <person name="Woyke T."/>
            <person name="Goodwin L."/>
            <person name="Detter C."/>
            <person name="Yavitt J.B."/>
            <person name="Zinder S.H."/>
        </authorList>
    </citation>
    <scope>NUCLEOTIDE SEQUENCE [LARGE SCALE GENOMIC DNA]</scope>
    <source>
        <strain>ATCC BAA-1556 / DSM 19958 / E1-9c</strain>
    </source>
</reference>
<gene>
    <name evidence="1" type="primary">cbiM1</name>
    <name type="ordered locus">Mpal_1702</name>
</gene>
<proteinExistence type="inferred from homology"/>
<comment type="function">
    <text evidence="1">Part of the energy-coupling factor (ECF) transporter complex CbiMNOQ involved in cobalt import.</text>
</comment>
<comment type="pathway">
    <text evidence="1">Cofactor biosynthesis; adenosylcobalamin biosynthesis.</text>
</comment>
<comment type="subunit">
    <text evidence="1">Forms an energy-coupling factor (ECF) transporter complex composed of an ATP-binding protein (A component, CbiO), a transmembrane protein (T component, CbiQ) and 2 possible substrate-capture proteins (S components, CbiM and CbiN) of unknown stoichimetry.</text>
</comment>
<comment type="subcellular location">
    <subcellularLocation>
        <location evidence="1">Cell membrane</location>
        <topology evidence="1">Multi-pass membrane protein</topology>
    </subcellularLocation>
</comment>
<comment type="similarity">
    <text evidence="1">Belongs to the CbiM family.</text>
</comment>
<sequence>MHIMEGFLPLQWCLFWFAVSAPFIAYGIYQLNRLVKENRSTLPLLAVCGAFIFVLSSLKMPSVTGSCSHPTGTGLGAIMFGPFITSVLSIIVLVYQALFLAHGGLTTLGANVFSMGICGPLLGYWVYQGGKAINLNSIVNVFLASALADIFTYVITSIQLSLAFPAAAGGYMTSFITFAGIFAVTQVPLAIIEGIFLTLTFKYINQIRPDILIHLGVISPAQSKQILEAYS</sequence>
<feature type="chain" id="PRO_0000411161" description="Putative cobalt transport protein CbiM 1">
    <location>
        <begin position="1"/>
        <end position="231"/>
    </location>
</feature>
<feature type="transmembrane region" description="Helical" evidence="1">
    <location>
        <begin position="8"/>
        <end position="28"/>
    </location>
</feature>
<feature type="transmembrane region" description="Helical" evidence="1">
    <location>
        <begin position="41"/>
        <end position="61"/>
    </location>
</feature>
<feature type="transmembrane region" description="Helical" evidence="1">
    <location>
        <begin position="74"/>
        <end position="94"/>
    </location>
</feature>
<feature type="transmembrane region" description="Helical" evidence="1">
    <location>
        <begin position="97"/>
        <end position="117"/>
    </location>
</feature>
<feature type="transmembrane region" description="Helical" evidence="1">
    <location>
        <begin position="138"/>
        <end position="158"/>
    </location>
</feature>
<feature type="transmembrane region" description="Helical" evidence="1">
    <location>
        <begin position="175"/>
        <end position="195"/>
    </location>
</feature>
<protein>
    <recommendedName>
        <fullName evidence="1">Putative cobalt transport protein CbiM 1</fullName>
    </recommendedName>
    <alternativeName>
        <fullName evidence="1">Energy-coupling factor transporter probable substrate-capture protein CbiM 1</fullName>
        <shortName evidence="1">ECF transporter S component CbiM 1</shortName>
    </alternativeName>
</protein>
<name>CBIM1_METPE</name>
<accession>B8GJG9</accession>
<dbReference type="EMBL" id="CP001338">
    <property type="protein sequence ID" value="ACL17010.1"/>
    <property type="molecule type" value="Genomic_DNA"/>
</dbReference>
<dbReference type="RefSeq" id="WP_012618329.1">
    <property type="nucleotide sequence ID" value="NC_011832.1"/>
</dbReference>
<dbReference type="SMR" id="B8GJG9"/>
<dbReference type="STRING" id="521011.Mpal_1702"/>
<dbReference type="GeneID" id="7271265"/>
<dbReference type="KEGG" id="mpl:Mpal_1702"/>
<dbReference type="eggNOG" id="arCOG02248">
    <property type="taxonomic scope" value="Archaea"/>
</dbReference>
<dbReference type="HOGENOM" id="CLU_052508_3_0_2"/>
<dbReference type="OrthoDB" id="30946at2157"/>
<dbReference type="UniPathway" id="UPA00148"/>
<dbReference type="Proteomes" id="UP000002457">
    <property type="component" value="Chromosome"/>
</dbReference>
<dbReference type="GO" id="GO:0043190">
    <property type="term" value="C:ATP-binding cassette (ABC) transporter complex"/>
    <property type="evidence" value="ECO:0007669"/>
    <property type="project" value="InterPro"/>
</dbReference>
<dbReference type="GO" id="GO:0015087">
    <property type="term" value="F:cobalt ion transmembrane transporter activity"/>
    <property type="evidence" value="ECO:0007669"/>
    <property type="project" value="UniProtKB-UniRule"/>
</dbReference>
<dbReference type="GO" id="GO:0009236">
    <property type="term" value="P:cobalamin biosynthetic process"/>
    <property type="evidence" value="ECO:0007669"/>
    <property type="project" value="UniProtKB-UniRule"/>
</dbReference>
<dbReference type="FunFam" id="1.10.1760.20:FF:000001">
    <property type="entry name" value="Cobalt transport protein CbiM"/>
    <property type="match status" value="1"/>
</dbReference>
<dbReference type="Gene3D" id="1.10.1760.20">
    <property type="match status" value="1"/>
</dbReference>
<dbReference type="HAMAP" id="MF_01462">
    <property type="entry name" value="CbiM"/>
    <property type="match status" value="1"/>
</dbReference>
<dbReference type="InterPro" id="IPR018024">
    <property type="entry name" value="CbiM"/>
</dbReference>
<dbReference type="InterPro" id="IPR002751">
    <property type="entry name" value="CbiM/NikMN"/>
</dbReference>
<dbReference type="NCBIfam" id="TIGR00123">
    <property type="entry name" value="cbiM"/>
    <property type="match status" value="1"/>
</dbReference>
<dbReference type="NCBIfam" id="NF006184">
    <property type="entry name" value="PRK08319.1"/>
    <property type="match status" value="1"/>
</dbReference>
<dbReference type="PANTHER" id="PTHR43627">
    <property type="match status" value="1"/>
</dbReference>
<dbReference type="PANTHER" id="PTHR43627:SF1">
    <property type="entry name" value="COBALT TRANSPORT PROTEIN CBIM"/>
    <property type="match status" value="1"/>
</dbReference>
<dbReference type="Pfam" id="PF01891">
    <property type="entry name" value="CbiM"/>
    <property type="match status" value="1"/>
</dbReference>
<evidence type="ECO:0000255" key="1">
    <source>
        <dbReference type="HAMAP-Rule" id="MF_01462"/>
    </source>
</evidence>